<proteinExistence type="inferred from homology"/>
<keyword id="KW-0131">Cell cycle</keyword>
<keyword id="KW-0132">Cell division</keyword>
<keyword id="KW-0342">GTP-binding</keyword>
<keyword id="KW-0460">Magnesium</keyword>
<keyword id="KW-0479">Metal-binding</keyword>
<keyword id="KW-0547">Nucleotide-binding</keyword>
<keyword id="KW-0717">Septation</keyword>
<accession>B2UX10</accession>
<organism>
    <name type="scientific">Clostridium botulinum (strain Alaska E43 / Type E3)</name>
    <dbReference type="NCBI Taxonomy" id="508767"/>
    <lineage>
        <taxon>Bacteria</taxon>
        <taxon>Bacillati</taxon>
        <taxon>Bacillota</taxon>
        <taxon>Clostridia</taxon>
        <taxon>Eubacteriales</taxon>
        <taxon>Clostridiaceae</taxon>
        <taxon>Clostridium</taxon>
    </lineage>
</organism>
<name>ENGB_CLOBA</name>
<gene>
    <name evidence="1" type="primary">engB</name>
    <name type="ordered locus">CLH_2615</name>
</gene>
<protein>
    <recommendedName>
        <fullName evidence="1">Probable GTP-binding protein EngB</fullName>
    </recommendedName>
</protein>
<comment type="function">
    <text evidence="1">Necessary for normal cell division and for the maintenance of normal septation.</text>
</comment>
<comment type="cofactor">
    <cofactor evidence="1">
        <name>Mg(2+)</name>
        <dbReference type="ChEBI" id="CHEBI:18420"/>
    </cofactor>
</comment>
<comment type="similarity">
    <text evidence="1">Belongs to the TRAFAC class TrmE-Era-EngA-EngB-Septin-like GTPase superfamily. EngB GTPase family.</text>
</comment>
<feature type="chain" id="PRO_1000115964" description="Probable GTP-binding protein EngB">
    <location>
        <begin position="1"/>
        <end position="198"/>
    </location>
</feature>
<feature type="domain" description="EngB-type G" evidence="1">
    <location>
        <begin position="22"/>
        <end position="195"/>
    </location>
</feature>
<feature type="binding site" evidence="1">
    <location>
        <begin position="30"/>
        <end position="37"/>
    </location>
    <ligand>
        <name>GTP</name>
        <dbReference type="ChEBI" id="CHEBI:37565"/>
    </ligand>
</feature>
<feature type="binding site" evidence="1">
    <location>
        <position position="37"/>
    </location>
    <ligand>
        <name>Mg(2+)</name>
        <dbReference type="ChEBI" id="CHEBI:18420"/>
    </ligand>
</feature>
<feature type="binding site" evidence="1">
    <location>
        <begin position="57"/>
        <end position="61"/>
    </location>
    <ligand>
        <name>GTP</name>
        <dbReference type="ChEBI" id="CHEBI:37565"/>
    </ligand>
</feature>
<feature type="binding site" evidence="1">
    <location>
        <position position="59"/>
    </location>
    <ligand>
        <name>Mg(2+)</name>
        <dbReference type="ChEBI" id="CHEBI:18420"/>
    </ligand>
</feature>
<feature type="binding site" evidence="1">
    <location>
        <begin position="75"/>
        <end position="78"/>
    </location>
    <ligand>
        <name>GTP</name>
        <dbReference type="ChEBI" id="CHEBI:37565"/>
    </ligand>
</feature>
<feature type="binding site" evidence="1">
    <location>
        <begin position="142"/>
        <end position="145"/>
    </location>
    <ligand>
        <name>GTP</name>
        <dbReference type="ChEBI" id="CHEBI:37565"/>
    </ligand>
</feature>
<feature type="binding site" evidence="1">
    <location>
        <begin position="174"/>
        <end position="176"/>
    </location>
    <ligand>
        <name>GTP</name>
        <dbReference type="ChEBI" id="CHEBI:37565"/>
    </ligand>
</feature>
<evidence type="ECO:0000255" key="1">
    <source>
        <dbReference type="HAMAP-Rule" id="MF_00321"/>
    </source>
</evidence>
<dbReference type="EMBL" id="CP001078">
    <property type="protein sequence ID" value="ACD54010.1"/>
    <property type="molecule type" value="Genomic_DNA"/>
</dbReference>
<dbReference type="SMR" id="B2UX10"/>
<dbReference type="KEGG" id="cbt:CLH_2615"/>
<dbReference type="HOGENOM" id="CLU_033732_3_0_9"/>
<dbReference type="GO" id="GO:0005829">
    <property type="term" value="C:cytosol"/>
    <property type="evidence" value="ECO:0007669"/>
    <property type="project" value="TreeGrafter"/>
</dbReference>
<dbReference type="GO" id="GO:0005525">
    <property type="term" value="F:GTP binding"/>
    <property type="evidence" value="ECO:0007669"/>
    <property type="project" value="UniProtKB-UniRule"/>
</dbReference>
<dbReference type="GO" id="GO:0046872">
    <property type="term" value="F:metal ion binding"/>
    <property type="evidence" value="ECO:0007669"/>
    <property type="project" value="UniProtKB-KW"/>
</dbReference>
<dbReference type="GO" id="GO:0000917">
    <property type="term" value="P:division septum assembly"/>
    <property type="evidence" value="ECO:0007669"/>
    <property type="project" value="UniProtKB-KW"/>
</dbReference>
<dbReference type="CDD" id="cd01876">
    <property type="entry name" value="YihA_EngB"/>
    <property type="match status" value="1"/>
</dbReference>
<dbReference type="FunFam" id="3.40.50.300:FF:000098">
    <property type="entry name" value="Probable GTP-binding protein EngB"/>
    <property type="match status" value="1"/>
</dbReference>
<dbReference type="Gene3D" id="3.40.50.300">
    <property type="entry name" value="P-loop containing nucleotide triphosphate hydrolases"/>
    <property type="match status" value="1"/>
</dbReference>
<dbReference type="HAMAP" id="MF_00321">
    <property type="entry name" value="GTPase_EngB"/>
    <property type="match status" value="1"/>
</dbReference>
<dbReference type="InterPro" id="IPR030393">
    <property type="entry name" value="G_ENGB_dom"/>
</dbReference>
<dbReference type="InterPro" id="IPR006073">
    <property type="entry name" value="GTP-bd"/>
</dbReference>
<dbReference type="InterPro" id="IPR019987">
    <property type="entry name" value="GTP-bd_ribosome_bio_YsxC"/>
</dbReference>
<dbReference type="InterPro" id="IPR027417">
    <property type="entry name" value="P-loop_NTPase"/>
</dbReference>
<dbReference type="NCBIfam" id="TIGR03598">
    <property type="entry name" value="GTPase_YsxC"/>
    <property type="match status" value="1"/>
</dbReference>
<dbReference type="PANTHER" id="PTHR11649:SF13">
    <property type="entry name" value="ENGB-TYPE G DOMAIN-CONTAINING PROTEIN"/>
    <property type="match status" value="1"/>
</dbReference>
<dbReference type="PANTHER" id="PTHR11649">
    <property type="entry name" value="MSS1/TRME-RELATED GTP-BINDING PROTEIN"/>
    <property type="match status" value="1"/>
</dbReference>
<dbReference type="Pfam" id="PF01926">
    <property type="entry name" value="MMR_HSR1"/>
    <property type="match status" value="1"/>
</dbReference>
<dbReference type="SUPFAM" id="SSF52540">
    <property type="entry name" value="P-loop containing nucleoside triphosphate hydrolases"/>
    <property type="match status" value="1"/>
</dbReference>
<dbReference type="PROSITE" id="PS51706">
    <property type="entry name" value="G_ENGB"/>
    <property type="match status" value="1"/>
</dbReference>
<sequence length="198" mass="22889">MRIKQSEFIISAVKPHQYPIDNRNEVAFVGRSNVGKSSLINSLTNRKKLAKVSGTPGKTRLINFFLINNDFYLVDLPGYGYAKVSKSEKDTWGKTIETYLSHREELKRIVCLVDSRHKPTGDDIMMYEWAKHFGYDVVIVATKSDKLKNAEFKKSEKLIRDTLKLTKDDKFYFYSSLNKKGTEELIDKLFLEFATDID</sequence>
<reference key="1">
    <citation type="submission" date="2008-05" db="EMBL/GenBank/DDBJ databases">
        <title>Complete genome sequence of Clostridium botulinum E3 str. Alaska E43.</title>
        <authorList>
            <person name="Brinkac L.M."/>
            <person name="Brown J.L."/>
            <person name="Bruce D."/>
            <person name="Detter C."/>
            <person name="Munk C."/>
            <person name="Smith L.A."/>
            <person name="Smith T.J."/>
            <person name="Sutton G."/>
            <person name="Brettin T.S."/>
        </authorList>
    </citation>
    <scope>NUCLEOTIDE SEQUENCE [LARGE SCALE GENOMIC DNA]</scope>
    <source>
        <strain>Alaska E43 / Type E3</strain>
    </source>
</reference>